<comment type="function">
    <text evidence="1">The RuvA-RuvB-RuvC complex processes Holliday junction (HJ) DNA during genetic recombination and DNA repair, while the RuvA-RuvB complex plays an important role in the rescue of blocked DNA replication forks via replication fork reversal (RFR). RuvA specifically binds to HJ cruciform DNA, conferring on it an open structure. The RuvB hexamer acts as an ATP-dependent pump, pulling dsDNA into and through the RuvAB complex. RuvB forms 2 homohexamers on either side of HJ DNA bound by 1 or 2 RuvA tetramers; 4 subunits per hexamer contact DNA at a time. Coordinated motions by a converter formed by DNA-disengaged RuvB subunits stimulates ATP hydrolysis and nucleotide exchange. Immobilization of the converter enables RuvB to convert the ATP-contained energy into a lever motion, pulling 2 nucleotides of DNA out of the RuvA tetramer per ATP hydrolyzed, thus driving DNA branch migration. The RuvB motors rotate together with the DNA substrate, which together with the progressing nucleotide cycle form the mechanistic basis for DNA recombination by continuous HJ branch migration. Branch migration allows RuvC to scan DNA until it finds its consensus sequence, where it cleaves and resolves cruciform DNA.</text>
</comment>
<comment type="catalytic activity">
    <reaction evidence="1">
        <text>ATP + H2O = ADP + phosphate + H(+)</text>
        <dbReference type="Rhea" id="RHEA:13065"/>
        <dbReference type="ChEBI" id="CHEBI:15377"/>
        <dbReference type="ChEBI" id="CHEBI:15378"/>
        <dbReference type="ChEBI" id="CHEBI:30616"/>
        <dbReference type="ChEBI" id="CHEBI:43474"/>
        <dbReference type="ChEBI" id="CHEBI:456216"/>
    </reaction>
</comment>
<comment type="subunit">
    <text evidence="1">Homohexamer. Forms an RuvA(8)-RuvB(12)-Holliday junction (HJ) complex. HJ DNA is sandwiched between 2 RuvA tetramers; dsDNA enters through RuvA and exits via RuvB. An RuvB hexamer assembles on each DNA strand where it exits the tetramer. Each RuvB hexamer is contacted by two RuvA subunits (via domain III) on 2 adjacent RuvB subunits; this complex drives branch migration. In the full resolvosome a probable DNA-RuvA(4)-RuvB(12)-RuvC(2) complex forms which resolves the HJ.</text>
</comment>
<comment type="subcellular location">
    <subcellularLocation>
        <location evidence="1">Cytoplasm</location>
    </subcellularLocation>
</comment>
<comment type="domain">
    <text evidence="1">Has 3 domains, the large (RuvB-L) and small ATPase (RuvB-S) domains and the C-terminal head (RuvB-H) domain. The head domain binds DNA, while the ATPase domains jointly bind ATP, ADP or are empty depending on the state of the subunit in the translocation cycle. During a single DNA translocation step the structure of each domain remains the same, but their relative positions change.</text>
</comment>
<comment type="similarity">
    <text evidence="1">Belongs to the RuvB family.</text>
</comment>
<name>RUVB_KLEP7</name>
<sequence length="336" mass="37146">MIEADRLVSADSSGFEEAADRAIRPKLLAEYVGQPQVRSQMEIFIQAAKLRGDALDHLLIFGPPGLGKTTLANIVANEMGVNLRTTSGPVLEKAGDLAAMLTNLEPHDVLFIDEIHRLSPVVEEVLYPAMEDYQLDIMIGEGPAARSIKIDLPPFTLIGATTRAGSLTSPLRDRFGIVQRLEFYQIPDLQHIVSRSARHMGLEMSDEGALEVARRSRGTPRIANRLLRRVRDFAEVRHDGTISADIAAQALDMLNVDAEGFDYMDRKLLLAVIDKFFGGPVGLDNLAAAIGEERETIEDVLEPYLIQQGFLQRTPRGRMATVRAWNHFGITPPEMP</sequence>
<keyword id="KW-0067">ATP-binding</keyword>
<keyword id="KW-0963">Cytoplasm</keyword>
<keyword id="KW-0227">DNA damage</keyword>
<keyword id="KW-0233">DNA recombination</keyword>
<keyword id="KW-0234">DNA repair</keyword>
<keyword id="KW-0238">DNA-binding</keyword>
<keyword id="KW-0378">Hydrolase</keyword>
<keyword id="KW-0547">Nucleotide-binding</keyword>
<protein>
    <recommendedName>
        <fullName evidence="1">Holliday junction branch migration complex subunit RuvB</fullName>
        <ecNumber evidence="1">3.6.4.-</ecNumber>
    </recommendedName>
</protein>
<accession>A6TB30</accession>
<reference key="1">
    <citation type="submission" date="2006-09" db="EMBL/GenBank/DDBJ databases">
        <authorList>
            <consortium name="The Klebsiella pneumonia Genome Sequencing Project"/>
            <person name="McClelland M."/>
            <person name="Sanderson E.K."/>
            <person name="Spieth J."/>
            <person name="Clifton W.S."/>
            <person name="Latreille P."/>
            <person name="Sabo A."/>
            <person name="Pepin K."/>
            <person name="Bhonagiri V."/>
            <person name="Porwollik S."/>
            <person name="Ali J."/>
            <person name="Wilson R.K."/>
        </authorList>
    </citation>
    <scope>NUCLEOTIDE SEQUENCE [LARGE SCALE GENOMIC DNA]</scope>
    <source>
        <strain>ATCC 700721 / MGH 78578</strain>
    </source>
</reference>
<feature type="chain" id="PRO_1000001418" description="Holliday junction branch migration complex subunit RuvB">
    <location>
        <begin position="1"/>
        <end position="336"/>
    </location>
</feature>
<feature type="region of interest" description="Large ATPase domain (RuvB-L)" evidence="1">
    <location>
        <begin position="4"/>
        <end position="184"/>
    </location>
</feature>
<feature type="region of interest" description="Small ATPAse domain (RuvB-S)" evidence="1">
    <location>
        <begin position="185"/>
        <end position="255"/>
    </location>
</feature>
<feature type="region of interest" description="Head domain (RuvB-H)" evidence="1">
    <location>
        <begin position="258"/>
        <end position="336"/>
    </location>
</feature>
<feature type="binding site" evidence="1">
    <location>
        <position position="23"/>
    </location>
    <ligand>
        <name>ATP</name>
        <dbReference type="ChEBI" id="CHEBI:30616"/>
    </ligand>
</feature>
<feature type="binding site" evidence="1">
    <location>
        <position position="24"/>
    </location>
    <ligand>
        <name>ATP</name>
        <dbReference type="ChEBI" id="CHEBI:30616"/>
    </ligand>
</feature>
<feature type="binding site" evidence="1">
    <location>
        <position position="65"/>
    </location>
    <ligand>
        <name>ATP</name>
        <dbReference type="ChEBI" id="CHEBI:30616"/>
    </ligand>
</feature>
<feature type="binding site" evidence="1">
    <location>
        <position position="68"/>
    </location>
    <ligand>
        <name>ATP</name>
        <dbReference type="ChEBI" id="CHEBI:30616"/>
    </ligand>
</feature>
<feature type="binding site" evidence="1">
    <location>
        <position position="69"/>
    </location>
    <ligand>
        <name>ATP</name>
        <dbReference type="ChEBI" id="CHEBI:30616"/>
    </ligand>
</feature>
<feature type="binding site" evidence="1">
    <location>
        <position position="69"/>
    </location>
    <ligand>
        <name>Mg(2+)</name>
        <dbReference type="ChEBI" id="CHEBI:18420"/>
    </ligand>
</feature>
<feature type="binding site" evidence="1">
    <location>
        <position position="70"/>
    </location>
    <ligand>
        <name>ATP</name>
        <dbReference type="ChEBI" id="CHEBI:30616"/>
    </ligand>
</feature>
<feature type="binding site" evidence="1">
    <location>
        <begin position="131"/>
        <end position="133"/>
    </location>
    <ligand>
        <name>ATP</name>
        <dbReference type="ChEBI" id="CHEBI:30616"/>
    </ligand>
</feature>
<feature type="binding site" evidence="1">
    <location>
        <position position="174"/>
    </location>
    <ligand>
        <name>ATP</name>
        <dbReference type="ChEBI" id="CHEBI:30616"/>
    </ligand>
</feature>
<feature type="binding site" evidence="1">
    <location>
        <position position="184"/>
    </location>
    <ligand>
        <name>ATP</name>
        <dbReference type="ChEBI" id="CHEBI:30616"/>
    </ligand>
</feature>
<feature type="binding site" evidence="1">
    <location>
        <position position="221"/>
    </location>
    <ligand>
        <name>ATP</name>
        <dbReference type="ChEBI" id="CHEBI:30616"/>
    </ligand>
</feature>
<feature type="binding site" evidence="1">
    <location>
        <position position="294"/>
    </location>
    <ligand>
        <name>DNA</name>
        <dbReference type="ChEBI" id="CHEBI:16991"/>
    </ligand>
</feature>
<feature type="binding site" evidence="1">
    <location>
        <position position="313"/>
    </location>
    <ligand>
        <name>DNA</name>
        <dbReference type="ChEBI" id="CHEBI:16991"/>
    </ligand>
</feature>
<feature type="binding site" evidence="1">
    <location>
        <position position="318"/>
    </location>
    <ligand>
        <name>DNA</name>
        <dbReference type="ChEBI" id="CHEBI:16991"/>
    </ligand>
</feature>
<dbReference type="EC" id="3.6.4.-" evidence="1"/>
<dbReference type="EMBL" id="CP000647">
    <property type="protein sequence ID" value="ABR77801.1"/>
    <property type="molecule type" value="Genomic_DNA"/>
</dbReference>
<dbReference type="RefSeq" id="WP_004148860.1">
    <property type="nucleotide sequence ID" value="NC_009648.1"/>
</dbReference>
<dbReference type="SMR" id="A6TB30"/>
<dbReference type="STRING" id="272620.KPN_02375"/>
<dbReference type="jPOST" id="A6TB30"/>
<dbReference type="PaxDb" id="272620-KPN_02375"/>
<dbReference type="EnsemblBacteria" id="ABR77801">
    <property type="protein sequence ID" value="ABR77801"/>
    <property type="gene ID" value="KPN_02375"/>
</dbReference>
<dbReference type="GeneID" id="93249647"/>
<dbReference type="KEGG" id="kpn:KPN_02375"/>
<dbReference type="HOGENOM" id="CLU_055599_1_0_6"/>
<dbReference type="Proteomes" id="UP000000265">
    <property type="component" value="Chromosome"/>
</dbReference>
<dbReference type="GO" id="GO:0005737">
    <property type="term" value="C:cytoplasm"/>
    <property type="evidence" value="ECO:0007669"/>
    <property type="project" value="UniProtKB-SubCell"/>
</dbReference>
<dbReference type="GO" id="GO:0048476">
    <property type="term" value="C:Holliday junction resolvase complex"/>
    <property type="evidence" value="ECO:0007669"/>
    <property type="project" value="UniProtKB-UniRule"/>
</dbReference>
<dbReference type="GO" id="GO:0005524">
    <property type="term" value="F:ATP binding"/>
    <property type="evidence" value="ECO:0007669"/>
    <property type="project" value="UniProtKB-UniRule"/>
</dbReference>
<dbReference type="GO" id="GO:0016887">
    <property type="term" value="F:ATP hydrolysis activity"/>
    <property type="evidence" value="ECO:0007669"/>
    <property type="project" value="InterPro"/>
</dbReference>
<dbReference type="GO" id="GO:0000400">
    <property type="term" value="F:four-way junction DNA binding"/>
    <property type="evidence" value="ECO:0007669"/>
    <property type="project" value="UniProtKB-UniRule"/>
</dbReference>
<dbReference type="GO" id="GO:0009378">
    <property type="term" value="F:four-way junction helicase activity"/>
    <property type="evidence" value="ECO:0007669"/>
    <property type="project" value="InterPro"/>
</dbReference>
<dbReference type="GO" id="GO:0006310">
    <property type="term" value="P:DNA recombination"/>
    <property type="evidence" value="ECO:0007669"/>
    <property type="project" value="UniProtKB-UniRule"/>
</dbReference>
<dbReference type="GO" id="GO:0006281">
    <property type="term" value="P:DNA repair"/>
    <property type="evidence" value="ECO:0007669"/>
    <property type="project" value="UniProtKB-UniRule"/>
</dbReference>
<dbReference type="CDD" id="cd00009">
    <property type="entry name" value="AAA"/>
    <property type="match status" value="1"/>
</dbReference>
<dbReference type="FunFam" id="1.10.10.10:FF:000086">
    <property type="entry name" value="Holliday junction ATP-dependent DNA helicase RuvB"/>
    <property type="match status" value="1"/>
</dbReference>
<dbReference type="FunFam" id="1.10.8.60:FF:000023">
    <property type="entry name" value="Holliday junction ATP-dependent DNA helicase RuvB"/>
    <property type="match status" value="1"/>
</dbReference>
<dbReference type="FunFam" id="3.40.50.300:FF:000073">
    <property type="entry name" value="Holliday junction ATP-dependent DNA helicase RuvB"/>
    <property type="match status" value="1"/>
</dbReference>
<dbReference type="Gene3D" id="1.10.8.60">
    <property type="match status" value="1"/>
</dbReference>
<dbReference type="Gene3D" id="3.40.50.300">
    <property type="entry name" value="P-loop containing nucleotide triphosphate hydrolases"/>
    <property type="match status" value="1"/>
</dbReference>
<dbReference type="Gene3D" id="1.10.10.10">
    <property type="entry name" value="Winged helix-like DNA-binding domain superfamily/Winged helix DNA-binding domain"/>
    <property type="match status" value="1"/>
</dbReference>
<dbReference type="HAMAP" id="MF_00016">
    <property type="entry name" value="DNA_HJ_migration_RuvB"/>
    <property type="match status" value="1"/>
</dbReference>
<dbReference type="InterPro" id="IPR003593">
    <property type="entry name" value="AAA+_ATPase"/>
</dbReference>
<dbReference type="InterPro" id="IPR041445">
    <property type="entry name" value="AAA_lid_4"/>
</dbReference>
<dbReference type="InterPro" id="IPR004605">
    <property type="entry name" value="DNA_helicase_Holl-junc_RuvB"/>
</dbReference>
<dbReference type="InterPro" id="IPR027417">
    <property type="entry name" value="P-loop_NTPase"/>
</dbReference>
<dbReference type="InterPro" id="IPR008824">
    <property type="entry name" value="RuvB-like_N"/>
</dbReference>
<dbReference type="InterPro" id="IPR008823">
    <property type="entry name" value="RuvB_C"/>
</dbReference>
<dbReference type="InterPro" id="IPR036388">
    <property type="entry name" value="WH-like_DNA-bd_sf"/>
</dbReference>
<dbReference type="InterPro" id="IPR036390">
    <property type="entry name" value="WH_DNA-bd_sf"/>
</dbReference>
<dbReference type="NCBIfam" id="NF000868">
    <property type="entry name" value="PRK00080.1"/>
    <property type="match status" value="1"/>
</dbReference>
<dbReference type="NCBIfam" id="TIGR00635">
    <property type="entry name" value="ruvB"/>
    <property type="match status" value="1"/>
</dbReference>
<dbReference type="PANTHER" id="PTHR42848">
    <property type="match status" value="1"/>
</dbReference>
<dbReference type="PANTHER" id="PTHR42848:SF1">
    <property type="entry name" value="HOLLIDAY JUNCTION BRANCH MIGRATION COMPLEX SUBUNIT RUVB"/>
    <property type="match status" value="1"/>
</dbReference>
<dbReference type="Pfam" id="PF17864">
    <property type="entry name" value="AAA_lid_4"/>
    <property type="match status" value="1"/>
</dbReference>
<dbReference type="Pfam" id="PF05491">
    <property type="entry name" value="RuvB_C"/>
    <property type="match status" value="1"/>
</dbReference>
<dbReference type="Pfam" id="PF05496">
    <property type="entry name" value="RuvB_N"/>
    <property type="match status" value="1"/>
</dbReference>
<dbReference type="SMART" id="SM00382">
    <property type="entry name" value="AAA"/>
    <property type="match status" value="1"/>
</dbReference>
<dbReference type="SUPFAM" id="SSF52540">
    <property type="entry name" value="P-loop containing nucleoside triphosphate hydrolases"/>
    <property type="match status" value="1"/>
</dbReference>
<dbReference type="SUPFAM" id="SSF46785">
    <property type="entry name" value="Winged helix' DNA-binding domain"/>
    <property type="match status" value="1"/>
</dbReference>
<organism>
    <name type="scientific">Klebsiella pneumoniae subsp. pneumoniae (strain ATCC 700721 / MGH 78578)</name>
    <dbReference type="NCBI Taxonomy" id="272620"/>
    <lineage>
        <taxon>Bacteria</taxon>
        <taxon>Pseudomonadati</taxon>
        <taxon>Pseudomonadota</taxon>
        <taxon>Gammaproteobacteria</taxon>
        <taxon>Enterobacterales</taxon>
        <taxon>Enterobacteriaceae</taxon>
        <taxon>Klebsiella/Raoultella group</taxon>
        <taxon>Klebsiella</taxon>
        <taxon>Klebsiella pneumoniae complex</taxon>
    </lineage>
</organism>
<proteinExistence type="inferred from homology"/>
<gene>
    <name evidence="1" type="primary">ruvB</name>
    <name type="ordered locus">KPN78578_23400</name>
    <name type="ORF">KPN_02375</name>
</gene>
<evidence type="ECO:0000255" key="1">
    <source>
        <dbReference type="HAMAP-Rule" id="MF_00016"/>
    </source>
</evidence>